<sequence>MADDPSAADRNVEIWKIKKLIKSLEAARGNGTSMISLIIPPKDQISRVAKMLADEFGTASNIKSRVNRLSVLGAITSVQQRLKLYNKVPPNGLVVYCGTIVTEEGKEKKVNIDFEPFKPINTSLYLCDNKFHTEALTALLSDDSKFGFIVIDGSGALFGTLQGNTREVLHKFTVDLPKKHGRGGQSALRFARLRMEKRHNYVRKVAETAVQLFISGDKVNVAGLVLAGSADFKTELSQSDMFDQRLQSKVLKLVDISYGGENGFNQAIELSTEVLSNVKFIQEKKLIGRYFDEISQDTGKYCFGVEDTLKALEMGAVEILIVYENLDTMRYVLRCNGSEEEKTLYLTPEQEKDKSHFIDKETGQEHELIESMPLLEWFANSYKKFGATLEIVTDKSQEGSQFVKGFGGIGGILRYRVDFQGMDYQGVDDEFFDLDDY</sequence>
<keyword id="KW-0963">Cytoplasm</keyword>
<keyword id="KW-0866">Nonsense-mediated mRNA decay</keyword>
<keyword id="KW-0648">Protein biosynthesis</keyword>
<keyword id="KW-1185">Reference proteome</keyword>
<evidence type="ECO:0000250" key="1">
    <source>
        <dbReference type="UniProtKB" id="P62495"/>
    </source>
</evidence>
<evidence type="ECO:0000269" key="2">
    <source>
    </source>
</evidence>
<evidence type="ECO:0000305" key="3"/>
<dbReference type="EMBL" id="X54055">
    <property type="protein sequence ID" value="CAA37987.1"/>
    <property type="molecule type" value="mRNA"/>
</dbReference>
<dbReference type="EMBL" id="Z14253">
    <property type="protein sequence ID" value="CAA78620.1"/>
    <property type="molecule type" value="mRNA"/>
</dbReference>
<dbReference type="EMBL" id="BC068651">
    <property type="protein sequence ID" value="AAH68651.1"/>
    <property type="molecule type" value="mRNA"/>
</dbReference>
<dbReference type="PIR" id="A48061">
    <property type="entry name" value="A48061"/>
</dbReference>
<dbReference type="RefSeq" id="NP_001084363.1">
    <property type="nucleotide sequence ID" value="NM_001090894.1"/>
</dbReference>
<dbReference type="BMRB" id="P35615"/>
<dbReference type="SMR" id="P35615"/>
<dbReference type="BioGRID" id="100786">
    <property type="interactions" value="1"/>
</dbReference>
<dbReference type="IntAct" id="P35615">
    <property type="interactions" value="1"/>
</dbReference>
<dbReference type="DNASU" id="399462"/>
<dbReference type="GeneID" id="399462"/>
<dbReference type="KEGG" id="xla:399462"/>
<dbReference type="AGR" id="Xenbase:XB-GENE-5744946"/>
<dbReference type="CTD" id="399462"/>
<dbReference type="Xenbase" id="XB-GENE-5744946">
    <property type="gene designation" value="etf1.S"/>
</dbReference>
<dbReference type="OMA" id="RCNGSEE"/>
<dbReference type="OrthoDB" id="10254527at2759"/>
<dbReference type="Proteomes" id="UP000186698">
    <property type="component" value="Chromosome 3S"/>
</dbReference>
<dbReference type="Bgee" id="399462">
    <property type="expression patterns" value="Expressed in gastrula and 19 other cell types or tissues"/>
</dbReference>
<dbReference type="GO" id="GO:0005737">
    <property type="term" value="C:cytoplasm"/>
    <property type="evidence" value="ECO:0000250"/>
    <property type="project" value="UniProtKB"/>
</dbReference>
<dbReference type="GO" id="GO:0005829">
    <property type="term" value="C:cytosol"/>
    <property type="evidence" value="ECO:0000318"/>
    <property type="project" value="GO_Central"/>
</dbReference>
<dbReference type="GO" id="GO:0018444">
    <property type="term" value="C:translation release factor complex"/>
    <property type="evidence" value="ECO:0000318"/>
    <property type="project" value="GO_Central"/>
</dbReference>
<dbReference type="GO" id="GO:1990825">
    <property type="term" value="F:sequence-specific mRNA binding"/>
    <property type="evidence" value="ECO:0000318"/>
    <property type="project" value="GO_Central"/>
</dbReference>
<dbReference type="GO" id="GO:0016149">
    <property type="term" value="F:translation release factor activity, codon specific"/>
    <property type="evidence" value="ECO:0000318"/>
    <property type="project" value="GO_Central"/>
</dbReference>
<dbReference type="GO" id="GO:0008079">
    <property type="term" value="F:translation termination factor activity"/>
    <property type="evidence" value="ECO:0000250"/>
    <property type="project" value="UniProtKB"/>
</dbReference>
<dbReference type="GO" id="GO:0002184">
    <property type="term" value="P:cytoplasmic translational termination"/>
    <property type="evidence" value="ECO:0000318"/>
    <property type="project" value="GO_Central"/>
</dbReference>
<dbReference type="GO" id="GO:0000184">
    <property type="term" value="P:nuclear-transcribed mRNA catabolic process, nonsense-mediated decay"/>
    <property type="evidence" value="ECO:0007669"/>
    <property type="project" value="UniProtKB-KW"/>
</dbReference>
<dbReference type="GO" id="GO:0006449">
    <property type="term" value="P:regulation of translational termination"/>
    <property type="evidence" value="ECO:0000250"/>
    <property type="project" value="UniProtKB"/>
</dbReference>
<dbReference type="FunFam" id="3.30.1330.30:FF:000009">
    <property type="entry name" value="Eukaryotic peptide chain release factor subunit 1"/>
    <property type="match status" value="1"/>
</dbReference>
<dbReference type="FunFam" id="3.30.420.60:FF:000001">
    <property type="entry name" value="Eukaryotic peptide chain release factor subunit 1"/>
    <property type="match status" value="1"/>
</dbReference>
<dbReference type="FunFam" id="3.30.960.10:FF:000001">
    <property type="entry name" value="Eukaryotic peptide chain release factor subunit 1"/>
    <property type="match status" value="1"/>
</dbReference>
<dbReference type="Gene3D" id="3.30.1330.30">
    <property type="match status" value="1"/>
</dbReference>
<dbReference type="Gene3D" id="3.30.960.10">
    <property type="entry name" value="eRF1 domain 1"/>
    <property type="match status" value="1"/>
</dbReference>
<dbReference type="Gene3D" id="3.30.420.60">
    <property type="entry name" value="eRF1 domain 2"/>
    <property type="match status" value="1"/>
</dbReference>
<dbReference type="InterPro" id="IPR042226">
    <property type="entry name" value="eFR1_2_sf"/>
</dbReference>
<dbReference type="InterPro" id="IPR005140">
    <property type="entry name" value="eRF1_1_Pelota"/>
</dbReference>
<dbReference type="InterPro" id="IPR024049">
    <property type="entry name" value="eRF1_1_sf"/>
</dbReference>
<dbReference type="InterPro" id="IPR005141">
    <property type="entry name" value="eRF1_2"/>
</dbReference>
<dbReference type="InterPro" id="IPR005142">
    <property type="entry name" value="eRF1_3"/>
</dbReference>
<dbReference type="InterPro" id="IPR004403">
    <property type="entry name" value="Peptide_chain-rel_eRF1/aRF1"/>
</dbReference>
<dbReference type="InterPro" id="IPR029064">
    <property type="entry name" value="Ribosomal_eL30-like_sf"/>
</dbReference>
<dbReference type="NCBIfam" id="TIGR03676">
    <property type="entry name" value="aRF1_eRF1"/>
    <property type="match status" value="1"/>
</dbReference>
<dbReference type="PANTHER" id="PTHR10113">
    <property type="entry name" value="PEPTIDE CHAIN RELEASE FACTOR SUBUNIT 1"/>
    <property type="match status" value="1"/>
</dbReference>
<dbReference type="Pfam" id="PF03463">
    <property type="entry name" value="eRF1_1"/>
    <property type="match status" value="1"/>
</dbReference>
<dbReference type="Pfam" id="PF03464">
    <property type="entry name" value="eRF1_2"/>
    <property type="match status" value="1"/>
</dbReference>
<dbReference type="Pfam" id="PF03465">
    <property type="entry name" value="eRF1_3"/>
    <property type="match status" value="1"/>
</dbReference>
<dbReference type="SMART" id="SM01194">
    <property type="entry name" value="eRF1_1"/>
    <property type="match status" value="1"/>
</dbReference>
<dbReference type="SUPFAM" id="SSF55315">
    <property type="entry name" value="L30e-like"/>
    <property type="match status" value="1"/>
</dbReference>
<dbReference type="SUPFAM" id="SSF55481">
    <property type="entry name" value="N-terminal domain of eukaryotic peptide chain release factor subunit 1, ERF1"/>
    <property type="match status" value="1"/>
</dbReference>
<dbReference type="SUPFAM" id="SSF53137">
    <property type="entry name" value="Translational machinery components"/>
    <property type="match status" value="1"/>
</dbReference>
<organism>
    <name type="scientific">Xenopus laevis</name>
    <name type="common">African clawed frog</name>
    <dbReference type="NCBI Taxonomy" id="8355"/>
    <lineage>
        <taxon>Eukaryota</taxon>
        <taxon>Metazoa</taxon>
        <taxon>Chordata</taxon>
        <taxon>Craniata</taxon>
        <taxon>Vertebrata</taxon>
        <taxon>Euteleostomi</taxon>
        <taxon>Amphibia</taxon>
        <taxon>Batrachia</taxon>
        <taxon>Anura</taxon>
        <taxon>Pipoidea</taxon>
        <taxon>Pipidae</taxon>
        <taxon>Xenopodinae</taxon>
        <taxon>Xenopus</taxon>
        <taxon>Xenopus</taxon>
    </lineage>
</organism>
<protein>
    <recommendedName>
        <fullName>Eukaryotic peptide chain release factor subunit 1</fullName>
        <shortName>Eukaryotic release factor 1</shortName>
        <shortName>eRF1</shortName>
    </recommendedName>
    <alternativeName>
        <fullName>Omnipotent suppressor protein 1 homolog</fullName>
        <shortName>SUP1 homolog</shortName>
    </alternativeName>
</protein>
<feature type="chain" id="PRO_0000143144" description="Eukaryotic peptide chain release factor subunit 1">
    <location>
        <begin position="1"/>
        <end position="437"/>
    </location>
</feature>
<feature type="short sequence motif" description="NIKS motif; plays an important role in translational termination" evidence="1">
    <location>
        <begin position="61"/>
        <end position="64"/>
    </location>
</feature>
<reference key="1">
    <citation type="journal article" date="1993" name="Mol. Cell. Biol.">
        <title>In Xenopus laevis, the product of a developmentally regulated mRNA is structurally and functionally homologous to a Saccharomyces cerevisiae protein involved in translation fidelity.</title>
        <authorList>
            <person name="Tassan J.P."/>
            <person name="le Guellec K."/>
            <person name="Kress M."/>
            <person name="Faure M."/>
            <person name="Camonis J."/>
            <person name="Jacquet M."/>
            <person name="Philippe M."/>
        </authorList>
    </citation>
    <scope>NUCLEOTIDE SEQUENCE [MRNA]</scope>
    <source>
        <tissue>Egg</tissue>
    </source>
</reference>
<reference key="2">
    <citation type="submission" date="2004-04" db="EMBL/GenBank/DDBJ databases">
        <authorList>
            <consortium name="NIH - Xenopus Gene Collection (XGC) project"/>
        </authorList>
    </citation>
    <scope>NUCLEOTIDE SEQUENCE [LARGE SCALE MRNA]</scope>
    <source>
        <tissue>Embryo</tissue>
    </source>
</reference>
<reference key="3">
    <citation type="journal article" date="1994" name="Nature">
        <title>A highly conserved eukaryotic protein family possessing properties of polypeptide chain release factor.</title>
        <authorList>
            <person name="Frolova L."/>
            <person name="Le Goff X."/>
            <person name="Rasmussen H.H."/>
            <person name="Cheprergin S."/>
            <person name="Drugeon G."/>
            <person name="Haenni A.-L."/>
            <person name="Celis J.E."/>
            <person name="Philippe M."/>
            <person name="Justesen J."/>
            <person name="Kisselev L."/>
        </authorList>
    </citation>
    <scope>FUNCTION</scope>
</reference>
<proteinExistence type="evidence at transcript level"/>
<accession>P35615</accession>
<accession>Q5D031</accession>
<gene>
    <name type="primary">etf1</name>
    <name type="synonym">cl1</name>
    <name type="synonym">erf1</name>
</gene>
<name>ERF1_XENLA</name>
<comment type="function">
    <text evidence="1 2">Component of the eRF1-eRF3-GTP ternary complex, a ternary complex that mediates translation termination in response to the termination codons (PubMed:7990965). The eRF1-eRF3-GTP complex binds to a stop codon in the ribosomal A-site (By similarity). ETF1/ERF1 is responsible for stop codon recognition and inducing hydrolysis of peptidyl-tRNA. Following GTP hydrolysis, eRF3 (GSPT1/ERF3A or GSPT2/ERF3B) dissociates, permitting ETF1/eRF1 to accommodate fully in the A-site, followed by hydrolysis of peptidyl-tRNA (By similarity).</text>
</comment>
<comment type="subunit">
    <text evidence="1">Component of the eRF1-eRF3-GTP ternary complex, composed of ETF1/ERF1 and eRF3 (GSPT1/ERF3A or GSPT2/ERF3B) and GTP.</text>
</comment>
<comment type="subcellular location">
    <subcellularLocation>
        <location evidence="1">Cytoplasm</location>
    </subcellularLocation>
</comment>
<comment type="similarity">
    <text evidence="3">Belongs to the eukaryotic release factor 1 family.</text>
</comment>